<protein>
    <recommendedName>
        <fullName evidence="1">tRNA (guanine(10)-N(2))-methyltransferase TRMT11</fullName>
        <ecNumber evidence="1">2.1.1.214</ecNumber>
    </recommendedName>
    <alternativeName>
        <fullName>tRNA methyltransferase 11 homolog</fullName>
    </alternativeName>
</protein>
<name>TRM11_XENLA</name>
<evidence type="ECO:0000250" key="1">
    <source>
        <dbReference type="UniProtKB" id="Q7Z4G4"/>
    </source>
</evidence>
<evidence type="ECO:0000255" key="2">
    <source>
        <dbReference type="PROSITE-ProRule" id="PRU00959"/>
    </source>
</evidence>
<evidence type="ECO:0000256" key="3">
    <source>
        <dbReference type="SAM" id="MobiDB-lite"/>
    </source>
</evidence>
<gene>
    <name type="primary">trmt11.L</name>
</gene>
<dbReference type="EC" id="2.1.1.214" evidence="1"/>
<dbReference type="EMBL" id="BC070528">
    <property type="protein sequence ID" value="AAH70528.1"/>
    <property type="molecule type" value="mRNA"/>
</dbReference>
<dbReference type="RefSeq" id="NP_001084954.1">
    <property type="nucleotide sequence ID" value="NM_001091485.1"/>
</dbReference>
<dbReference type="SMR" id="Q6NS23"/>
<dbReference type="DNASU" id="432012"/>
<dbReference type="GeneID" id="432012"/>
<dbReference type="KEGG" id="xla:432012"/>
<dbReference type="AGR" id="Xenbase:XB-GENE-950556"/>
<dbReference type="CTD" id="432012"/>
<dbReference type="OrthoDB" id="296065at2759"/>
<dbReference type="Proteomes" id="UP000186698">
    <property type="component" value="Chromosome 5L"/>
</dbReference>
<dbReference type="Bgee" id="432012">
    <property type="expression patterns" value="Expressed in egg cell and 19 other cell types or tissues"/>
</dbReference>
<dbReference type="GO" id="GO:0005737">
    <property type="term" value="C:cytoplasm"/>
    <property type="evidence" value="ECO:0000250"/>
    <property type="project" value="UniProtKB"/>
</dbReference>
<dbReference type="GO" id="GO:0043528">
    <property type="term" value="C:tRNA (m2G10) methyltransferase complex"/>
    <property type="evidence" value="ECO:0000250"/>
    <property type="project" value="UniProtKB"/>
</dbReference>
<dbReference type="GO" id="GO:0008168">
    <property type="term" value="F:methyltransferase activity"/>
    <property type="evidence" value="ECO:0000318"/>
    <property type="project" value="GO_Central"/>
</dbReference>
<dbReference type="GO" id="GO:0160102">
    <property type="term" value="F:tRNA (guanine(10)-N2)-methyltransferase activity"/>
    <property type="evidence" value="ECO:0000250"/>
    <property type="project" value="UniProtKB"/>
</dbReference>
<dbReference type="GO" id="GO:0000049">
    <property type="term" value="F:tRNA binding"/>
    <property type="evidence" value="ECO:0007669"/>
    <property type="project" value="UniProtKB-KW"/>
</dbReference>
<dbReference type="GO" id="GO:0032259">
    <property type="term" value="P:methylation"/>
    <property type="evidence" value="ECO:0007669"/>
    <property type="project" value="UniProtKB-KW"/>
</dbReference>
<dbReference type="GO" id="GO:0008033">
    <property type="term" value="P:tRNA processing"/>
    <property type="evidence" value="ECO:0007669"/>
    <property type="project" value="UniProtKB-KW"/>
</dbReference>
<dbReference type="CDD" id="cd02440">
    <property type="entry name" value="AdoMet_MTases"/>
    <property type="match status" value="1"/>
</dbReference>
<dbReference type="FunFam" id="3.40.50.150:FF:000069">
    <property type="entry name" value="tRNA (Guanine(10)-N2)-methyltransferase homolog isoform X2"/>
    <property type="match status" value="1"/>
</dbReference>
<dbReference type="Gene3D" id="3.40.50.150">
    <property type="entry name" value="Vaccinia Virus protein VP39"/>
    <property type="match status" value="1"/>
</dbReference>
<dbReference type="InterPro" id="IPR002052">
    <property type="entry name" value="DNA_methylase_N6_adenine_CS"/>
</dbReference>
<dbReference type="InterPro" id="IPR000241">
    <property type="entry name" value="RlmKL-like_Mtase"/>
</dbReference>
<dbReference type="InterPro" id="IPR029063">
    <property type="entry name" value="SAM-dependent_MTases_sf"/>
</dbReference>
<dbReference type="InterPro" id="IPR016691">
    <property type="entry name" value="tRNA_mtfrase_TRM11"/>
</dbReference>
<dbReference type="PANTHER" id="PTHR13370">
    <property type="entry name" value="RNA METHYLASE-RELATED"/>
    <property type="match status" value="1"/>
</dbReference>
<dbReference type="PANTHER" id="PTHR13370:SF3">
    <property type="entry name" value="TRNA (GUANINE(10)-N2)-METHYLTRANSFERASE HOMOLOG"/>
    <property type="match status" value="1"/>
</dbReference>
<dbReference type="Pfam" id="PF01170">
    <property type="entry name" value="UPF0020"/>
    <property type="match status" value="1"/>
</dbReference>
<dbReference type="PIRSF" id="PIRSF017259">
    <property type="entry name" value="tRNA_mtfrase_TRM11"/>
    <property type="match status" value="1"/>
</dbReference>
<dbReference type="PRINTS" id="PR00507">
    <property type="entry name" value="N12N6MTFRASE"/>
</dbReference>
<dbReference type="SUPFAM" id="SSF53335">
    <property type="entry name" value="S-adenosyl-L-methionine-dependent methyltransferases"/>
    <property type="match status" value="1"/>
</dbReference>
<dbReference type="PROSITE" id="PS00092">
    <property type="entry name" value="N6_MTASE"/>
    <property type="match status" value="1"/>
</dbReference>
<dbReference type="PROSITE" id="PS51627">
    <property type="entry name" value="SAM_MT_TRM11"/>
    <property type="match status" value="1"/>
</dbReference>
<keyword id="KW-0963">Cytoplasm</keyword>
<keyword id="KW-0489">Methyltransferase</keyword>
<keyword id="KW-1185">Reference proteome</keyword>
<keyword id="KW-0694">RNA-binding</keyword>
<keyword id="KW-0949">S-adenosyl-L-methionine</keyword>
<keyword id="KW-0808">Transferase</keyword>
<keyword id="KW-0819">tRNA processing</keyword>
<keyword id="KW-0820">tRNA-binding</keyword>
<feature type="chain" id="PRO_0000328120" description="tRNA (guanine(10)-N(2))-methyltransferase TRMT11">
    <location>
        <begin position="1"/>
        <end position="478"/>
    </location>
</feature>
<feature type="region of interest" description="Disordered" evidence="3">
    <location>
        <begin position="457"/>
        <end position="478"/>
    </location>
</feature>
<comment type="function">
    <text evidence="1">Catalytic subunit of the TRMT11-TRM112 methyltransferase complex, that specifically mediates the S-adenosyl-L-methionine-dependent N(2)-methylation of guanosine nucleotide at position 10 (m2G10) in tRNAs. This is one of the major tRNA (guanine-N(2))-methyltransferases.</text>
</comment>
<comment type="catalytic activity">
    <reaction evidence="1">
        <text>guanosine(10) in tRNA + S-adenosyl-L-methionine = N(2)-methylguanosine(10) in tRNA + S-adenosyl-L-homocysteine + H(+)</text>
        <dbReference type="Rhea" id="RHEA:43128"/>
        <dbReference type="Rhea" id="RHEA-COMP:10355"/>
        <dbReference type="Rhea" id="RHEA-COMP:10357"/>
        <dbReference type="ChEBI" id="CHEBI:15378"/>
        <dbReference type="ChEBI" id="CHEBI:57856"/>
        <dbReference type="ChEBI" id="CHEBI:59789"/>
        <dbReference type="ChEBI" id="CHEBI:74269"/>
        <dbReference type="ChEBI" id="CHEBI:74481"/>
        <dbReference type="EC" id="2.1.1.214"/>
    </reaction>
    <physiologicalReaction direction="left-to-right" evidence="1">
        <dbReference type="Rhea" id="RHEA:43129"/>
    </physiologicalReaction>
</comment>
<comment type="subunit">
    <text evidence="1">Part of the heterodimeric TRMT11-TRM112 methyltransferase complex; this complex forms an active tRNA methyltransferase, where TRMT112 acts as an activator of the catalytic subunit TRMT11.</text>
</comment>
<comment type="subcellular location">
    <subcellularLocation>
        <location evidence="1">Cytoplasm</location>
    </subcellularLocation>
</comment>
<comment type="similarity">
    <text evidence="2">Belongs to the class I-like SAM-binding methyltransferase superfamily. TRM11 methyltransferase family.</text>
</comment>
<proteinExistence type="evidence at transcript level"/>
<reference key="1">
    <citation type="submission" date="2004-05" db="EMBL/GenBank/DDBJ databases">
        <authorList>
            <consortium name="NIH - Xenopus Gene Collection (XGC) project"/>
        </authorList>
    </citation>
    <scope>NUCLEOTIDE SEQUENCE [LARGE SCALE MRNA]</scope>
    <source>
        <tissue>Embryo</tissue>
    </source>
</reference>
<sequence>MALPCKTGAAFKKYLLLLAQENCEFRLPEIKSLLSLYGGHFNNLQDEHGKSPFCILNLPSEEMARKLMKRTVCAKSVFELWGHGKTFMEFQQSVLSYPLENMMSYLQPNSTYKIIIHSFNKTLTQKEKLEKINTMEFIPFQGKVNLQNAENIFYLLEDYGSDPNKAPNEPFEIFFGRWIADGQRELINSYSVKKRHFIGNTSMDAGLSFIMANHARVKPNDVVFDPFVGTGGLLVSSAHFGAYVCGTEIDYNTVHGLGKATRMNQKWRGPDENIRANLRQYGLEKYYLDVLVSDASKPVWRKAPLFDAIITDPPYGIRESTRKTGTQKEIIKTELFPESHVPVQLNYHLSDIFSDLFAFASEFLVTGGRLVYWLPVYRPEYTEEVLPRHPCLKLISNCEQMLSSHTSRRLITMEKVKEFEEKYQYAHLGEGQNLPYKGHNSFREKYFSGLKKRTAREERARSEMANAENVKSKGKEDV</sequence>
<accession>Q6NS23</accession>
<organism>
    <name type="scientific">Xenopus laevis</name>
    <name type="common">African clawed frog</name>
    <dbReference type="NCBI Taxonomy" id="8355"/>
    <lineage>
        <taxon>Eukaryota</taxon>
        <taxon>Metazoa</taxon>
        <taxon>Chordata</taxon>
        <taxon>Craniata</taxon>
        <taxon>Vertebrata</taxon>
        <taxon>Euteleostomi</taxon>
        <taxon>Amphibia</taxon>
        <taxon>Batrachia</taxon>
        <taxon>Anura</taxon>
        <taxon>Pipoidea</taxon>
        <taxon>Pipidae</taxon>
        <taxon>Xenopodinae</taxon>
        <taxon>Xenopus</taxon>
        <taxon>Xenopus</taxon>
    </lineage>
</organism>